<dbReference type="EC" id="2.3.1.181" evidence="1"/>
<dbReference type="EMBL" id="BX571965">
    <property type="protein sequence ID" value="CAH34401.1"/>
    <property type="molecule type" value="Genomic_DNA"/>
</dbReference>
<dbReference type="SMR" id="Q63XX6"/>
<dbReference type="STRING" id="272560.BPSL0413"/>
<dbReference type="KEGG" id="bps:BPSL0413"/>
<dbReference type="eggNOG" id="COG0321">
    <property type="taxonomic scope" value="Bacteria"/>
</dbReference>
<dbReference type="UniPathway" id="UPA00538">
    <property type="reaction ID" value="UER00592"/>
</dbReference>
<dbReference type="Proteomes" id="UP000000605">
    <property type="component" value="Chromosome 1"/>
</dbReference>
<dbReference type="GO" id="GO:0005737">
    <property type="term" value="C:cytoplasm"/>
    <property type="evidence" value="ECO:0007669"/>
    <property type="project" value="UniProtKB-SubCell"/>
</dbReference>
<dbReference type="GO" id="GO:0033819">
    <property type="term" value="F:lipoyl(octanoyl) transferase activity"/>
    <property type="evidence" value="ECO:0007669"/>
    <property type="project" value="UniProtKB-EC"/>
</dbReference>
<dbReference type="GO" id="GO:0036211">
    <property type="term" value="P:protein modification process"/>
    <property type="evidence" value="ECO:0007669"/>
    <property type="project" value="InterPro"/>
</dbReference>
<dbReference type="CDD" id="cd16444">
    <property type="entry name" value="LipB"/>
    <property type="match status" value="1"/>
</dbReference>
<dbReference type="FunFam" id="3.30.930.10:FF:000020">
    <property type="entry name" value="Octanoyltransferase"/>
    <property type="match status" value="1"/>
</dbReference>
<dbReference type="Gene3D" id="3.30.930.10">
    <property type="entry name" value="Bira Bifunctional Protein, Domain 2"/>
    <property type="match status" value="1"/>
</dbReference>
<dbReference type="HAMAP" id="MF_00013">
    <property type="entry name" value="LipB"/>
    <property type="match status" value="1"/>
</dbReference>
<dbReference type="InterPro" id="IPR045864">
    <property type="entry name" value="aa-tRNA-synth_II/BPL/LPL"/>
</dbReference>
<dbReference type="InterPro" id="IPR004143">
    <property type="entry name" value="BPL_LPL_catalytic"/>
</dbReference>
<dbReference type="InterPro" id="IPR000544">
    <property type="entry name" value="Octanoyltransferase"/>
</dbReference>
<dbReference type="InterPro" id="IPR020605">
    <property type="entry name" value="Octanoyltransferase_CS"/>
</dbReference>
<dbReference type="NCBIfam" id="TIGR00214">
    <property type="entry name" value="lipB"/>
    <property type="match status" value="1"/>
</dbReference>
<dbReference type="NCBIfam" id="NF010922">
    <property type="entry name" value="PRK14342.1"/>
    <property type="match status" value="1"/>
</dbReference>
<dbReference type="NCBIfam" id="NF010923">
    <property type="entry name" value="PRK14343.1"/>
    <property type="match status" value="1"/>
</dbReference>
<dbReference type="PANTHER" id="PTHR10993:SF7">
    <property type="entry name" value="LIPOYLTRANSFERASE 2, MITOCHONDRIAL-RELATED"/>
    <property type="match status" value="1"/>
</dbReference>
<dbReference type="PANTHER" id="PTHR10993">
    <property type="entry name" value="OCTANOYLTRANSFERASE"/>
    <property type="match status" value="1"/>
</dbReference>
<dbReference type="Pfam" id="PF21948">
    <property type="entry name" value="LplA-B_cat"/>
    <property type="match status" value="1"/>
</dbReference>
<dbReference type="PIRSF" id="PIRSF016262">
    <property type="entry name" value="LPLase"/>
    <property type="match status" value="1"/>
</dbReference>
<dbReference type="SUPFAM" id="SSF55681">
    <property type="entry name" value="Class II aaRS and biotin synthetases"/>
    <property type="match status" value="1"/>
</dbReference>
<dbReference type="PROSITE" id="PS51733">
    <property type="entry name" value="BPL_LPL_CATALYTIC"/>
    <property type="match status" value="1"/>
</dbReference>
<dbReference type="PROSITE" id="PS01313">
    <property type="entry name" value="LIPB"/>
    <property type="match status" value="1"/>
</dbReference>
<gene>
    <name evidence="1" type="primary">lipB</name>
    <name type="ordered locus">BPSL0413</name>
</gene>
<feature type="chain" id="PRO_0000062824" description="Octanoyltransferase">
    <location>
        <begin position="1"/>
        <end position="225"/>
    </location>
</feature>
<feature type="domain" description="BPL/LPL catalytic" evidence="2">
    <location>
        <begin position="29"/>
        <end position="210"/>
    </location>
</feature>
<feature type="active site" description="Acyl-thioester intermediate" evidence="1">
    <location>
        <position position="172"/>
    </location>
</feature>
<feature type="binding site" evidence="1">
    <location>
        <begin position="69"/>
        <end position="76"/>
    </location>
    <ligand>
        <name>substrate</name>
    </ligand>
</feature>
<feature type="binding site" evidence="1">
    <location>
        <begin position="141"/>
        <end position="143"/>
    </location>
    <ligand>
        <name>substrate</name>
    </ligand>
</feature>
<feature type="binding site" evidence="1">
    <location>
        <begin position="154"/>
        <end position="156"/>
    </location>
    <ligand>
        <name>substrate</name>
    </ligand>
</feature>
<feature type="site" description="Lowers pKa of active site Cys" evidence="1">
    <location>
        <position position="138"/>
    </location>
</feature>
<protein>
    <recommendedName>
        <fullName evidence="1">Octanoyltransferase</fullName>
        <ecNumber evidence="1">2.3.1.181</ecNumber>
    </recommendedName>
    <alternativeName>
        <fullName evidence="1">Lipoate-protein ligase B</fullName>
    </alternativeName>
    <alternativeName>
        <fullName evidence="1">Lipoyl/octanoyl transferase</fullName>
    </alternativeName>
    <alternativeName>
        <fullName evidence="1">Octanoyl-[acyl-carrier-protein]-protein N-octanoyltransferase</fullName>
    </alternativeName>
</protein>
<comment type="function">
    <text evidence="1">Catalyzes the transfer of endogenously produced octanoic acid from octanoyl-acyl-carrier-protein onto the lipoyl domains of lipoate-dependent enzymes. Lipoyl-ACP can also act as a substrate although octanoyl-ACP is likely to be the physiological substrate.</text>
</comment>
<comment type="catalytic activity">
    <reaction evidence="1">
        <text>octanoyl-[ACP] + L-lysyl-[protein] = N(6)-octanoyl-L-lysyl-[protein] + holo-[ACP] + H(+)</text>
        <dbReference type="Rhea" id="RHEA:17665"/>
        <dbReference type="Rhea" id="RHEA-COMP:9636"/>
        <dbReference type="Rhea" id="RHEA-COMP:9685"/>
        <dbReference type="Rhea" id="RHEA-COMP:9752"/>
        <dbReference type="Rhea" id="RHEA-COMP:9928"/>
        <dbReference type="ChEBI" id="CHEBI:15378"/>
        <dbReference type="ChEBI" id="CHEBI:29969"/>
        <dbReference type="ChEBI" id="CHEBI:64479"/>
        <dbReference type="ChEBI" id="CHEBI:78463"/>
        <dbReference type="ChEBI" id="CHEBI:78809"/>
        <dbReference type="EC" id="2.3.1.181"/>
    </reaction>
</comment>
<comment type="pathway">
    <text evidence="1">Protein modification; protein lipoylation via endogenous pathway; protein N(6)-(lipoyl)lysine from octanoyl-[acyl-carrier-protein]: step 1/2.</text>
</comment>
<comment type="subcellular location">
    <subcellularLocation>
        <location evidence="1">Cytoplasm</location>
    </subcellularLocation>
</comment>
<comment type="miscellaneous">
    <text evidence="1">In the reaction, the free carboxyl group of octanoic acid is attached via an amide linkage to the epsilon-amino group of a specific lysine residue of lipoyl domains of lipoate-dependent enzymes.</text>
</comment>
<comment type="similarity">
    <text evidence="1">Belongs to the LipB family.</text>
</comment>
<organism>
    <name type="scientific">Burkholderia pseudomallei (strain K96243)</name>
    <dbReference type="NCBI Taxonomy" id="272560"/>
    <lineage>
        <taxon>Bacteria</taxon>
        <taxon>Pseudomonadati</taxon>
        <taxon>Pseudomonadota</taxon>
        <taxon>Betaproteobacteria</taxon>
        <taxon>Burkholderiales</taxon>
        <taxon>Burkholderiaceae</taxon>
        <taxon>Burkholderia</taxon>
        <taxon>pseudomallei group</taxon>
    </lineage>
</organism>
<keyword id="KW-0012">Acyltransferase</keyword>
<keyword id="KW-0963">Cytoplasm</keyword>
<keyword id="KW-1185">Reference proteome</keyword>
<keyword id="KW-0808">Transferase</keyword>
<accession>Q63XX6</accession>
<reference key="1">
    <citation type="journal article" date="2004" name="Proc. Natl. Acad. Sci. U.S.A.">
        <title>Genomic plasticity of the causative agent of melioidosis, Burkholderia pseudomallei.</title>
        <authorList>
            <person name="Holden M.T.G."/>
            <person name="Titball R.W."/>
            <person name="Peacock S.J."/>
            <person name="Cerdeno-Tarraga A.-M."/>
            <person name="Atkins T."/>
            <person name="Crossman L.C."/>
            <person name="Pitt T."/>
            <person name="Churcher C."/>
            <person name="Mungall K.L."/>
            <person name="Bentley S.D."/>
            <person name="Sebaihia M."/>
            <person name="Thomson N.R."/>
            <person name="Bason N."/>
            <person name="Beacham I.R."/>
            <person name="Brooks K."/>
            <person name="Brown K.A."/>
            <person name="Brown N.F."/>
            <person name="Challis G.L."/>
            <person name="Cherevach I."/>
            <person name="Chillingworth T."/>
            <person name="Cronin A."/>
            <person name="Crossett B."/>
            <person name="Davis P."/>
            <person name="DeShazer D."/>
            <person name="Feltwell T."/>
            <person name="Fraser A."/>
            <person name="Hance Z."/>
            <person name="Hauser H."/>
            <person name="Holroyd S."/>
            <person name="Jagels K."/>
            <person name="Keith K.E."/>
            <person name="Maddison M."/>
            <person name="Moule S."/>
            <person name="Price C."/>
            <person name="Quail M.A."/>
            <person name="Rabbinowitsch E."/>
            <person name="Rutherford K."/>
            <person name="Sanders M."/>
            <person name="Simmonds M."/>
            <person name="Songsivilai S."/>
            <person name="Stevens K."/>
            <person name="Tumapa S."/>
            <person name="Vesaratchavest M."/>
            <person name="Whitehead S."/>
            <person name="Yeats C."/>
            <person name="Barrell B.G."/>
            <person name="Oyston P.C.F."/>
            <person name="Parkhill J."/>
        </authorList>
    </citation>
    <scope>NUCLEOTIDE SEQUENCE [LARGE SCALE GENOMIC DNA]</scope>
    <source>
        <strain>K96243</strain>
    </source>
</reference>
<proteinExistence type="inferred from homology"/>
<name>LIPB_BURPS</name>
<evidence type="ECO:0000255" key="1">
    <source>
        <dbReference type="HAMAP-Rule" id="MF_00013"/>
    </source>
</evidence>
<evidence type="ECO:0000255" key="2">
    <source>
        <dbReference type="PROSITE-ProRule" id="PRU01067"/>
    </source>
</evidence>
<sequence length="225" mass="24264">MPVTVRWLGETPYDACFDAMRAFTDARTPDTDDEIWVVEHPPVYTLGQAGNPAHLLVADSGVPLVKVDRGGQITYHGPGQIVAYLLVDLRRRKLMVRTLVTRIEEAVIETLAAYNLASARKAGAPGIYVESGPHRGAKIAALGLKIRNGCSYHGLSVNVKMDLRPFLAINPCGYAGLETIDMASLGATADWHEVAQTLVRRLIAHLDGATAAAALPQQALEQSND</sequence>